<evidence type="ECO:0000250" key="1">
    <source>
        <dbReference type="UniProtKB" id="Q8IUQ0"/>
    </source>
</evidence>
<evidence type="ECO:0000255" key="2">
    <source>
        <dbReference type="PROSITE-ProRule" id="PRU00056"/>
    </source>
</evidence>
<evidence type="ECO:0000256" key="3">
    <source>
        <dbReference type="SAM" id="MobiDB-lite"/>
    </source>
</evidence>
<evidence type="ECO:0000269" key="4">
    <source>
    </source>
</evidence>
<evidence type="ECO:0000303" key="5">
    <source>
    </source>
</evidence>
<evidence type="ECO:0000305" key="6"/>
<gene>
    <name evidence="5" type="primary">Clvs1</name>
    <name evidence="1" type="synonym">Rlbp1l1</name>
</gene>
<proteinExistence type="evidence at protein level"/>
<accession>A6JFQ6</accession>
<name>CLVS1_RAT</name>
<organism>
    <name type="scientific">Rattus norvegicus</name>
    <name type="common">Rat</name>
    <dbReference type="NCBI Taxonomy" id="10116"/>
    <lineage>
        <taxon>Eukaryota</taxon>
        <taxon>Metazoa</taxon>
        <taxon>Chordata</taxon>
        <taxon>Craniata</taxon>
        <taxon>Vertebrata</taxon>
        <taxon>Euteleostomi</taxon>
        <taxon>Mammalia</taxon>
        <taxon>Eutheria</taxon>
        <taxon>Euarchontoglires</taxon>
        <taxon>Glires</taxon>
        <taxon>Rodentia</taxon>
        <taxon>Myomorpha</taxon>
        <taxon>Muroidea</taxon>
        <taxon>Muridae</taxon>
        <taxon>Murinae</taxon>
        <taxon>Rattus</taxon>
    </lineage>
</organism>
<comment type="function">
    <text evidence="1 4">Required for normal morphology of late endosomes and/or lysosomes in neurons. Binds phosphatidylinositol 3,5-bisphosphate (PtdIns(3,5)P2).</text>
</comment>
<comment type="subunit">
    <text evidence="1">Forms a complex with clathrin heavy chain and gamma-adaptin.</text>
</comment>
<comment type="subcellular location">
    <subcellularLocation>
        <location evidence="4">Golgi apparatus</location>
        <location evidence="4">trans-Golgi network membrane</location>
        <topology evidence="4">Peripheral membrane protein</topology>
    </subcellularLocation>
    <subcellularLocation>
        <location evidence="1">Early endosome membrane</location>
        <topology evidence="1">Peripheral membrane protein</topology>
    </subcellularLocation>
    <subcellularLocation>
        <location evidence="4">Cytoplasmic vesicle</location>
        <location evidence="4">Clathrin-coated vesicle</location>
    </subcellularLocation>
</comment>
<comment type="tissue specificity">
    <text evidence="4">Expressed in brain with no expression detected in non-neuronal tissues (at protein level).</text>
</comment>
<comment type="domain">
    <text evidence="1">The CRAL-TRIO domain is required for targeting to the membrane and for binding PtdIns(3,5)P2.</text>
</comment>
<comment type="miscellaneous">
    <text evidence="1">Binding to PtdIns(3,5)P2 is not required for localization.</text>
</comment>
<sequence>MGPVSVLPKPQSISTWEGDLAKMTHLQAGLSPDTIEKARLELNENPDVLHQDIQQVRDMIITRPDIGFLRTDDAFILRFLRARKFHQADAFRLLAQYFQYRQLNLDMFKNFKADDPGIKRALIDGFPGVLENRDHYGRKILLLFAANWDQSRNSFTDILRAILLSLEVLIEDPELQINGFILIIDWSNFSFKQASKLTPSILKLAIEGLQDSFPARFGGVHFVNQPWYIHALYTLIKPFLKDKTRKRIFLHGNNLNSLHQLIHPEFLPSEFGGTLPPYDMGTWARTLLGPDYSDENDYTHTSYNAMYVKHTCSNLERECSPKPMKRSQSVVEAGTLKHEEKGENENTQPLLALD</sequence>
<reference evidence="6" key="1">
    <citation type="submission" date="2005-07" db="EMBL/GenBank/DDBJ databases">
        <authorList>
            <person name="Mural R.J."/>
            <person name="Adams M.D."/>
            <person name="Myers E.W."/>
            <person name="Smith H.O."/>
            <person name="Venter J.C."/>
        </authorList>
    </citation>
    <scope>NUCLEOTIDE SEQUENCE [LARGE SCALE GENOMIC DNA]</scope>
</reference>
<reference evidence="6" key="2">
    <citation type="journal article" date="2009" name="J. Biol. Chem.">
        <title>The clavesin family: neuron-specific lipid- and clathrin-binding Sec14 proteins regulating lysosomal morphology.</title>
        <authorList>
            <person name="Katoh Y."/>
            <person name="Ritter B."/>
            <person name="Gaffry T."/>
            <person name="Blondeau F."/>
            <person name="Honing S."/>
            <person name="McPherson P.S."/>
        </authorList>
    </citation>
    <scope>FUNCTION</scope>
    <scope>SUBCELLULAR LOCATION</scope>
    <scope>TISSUE SPECIFICITY</scope>
</reference>
<dbReference type="EMBL" id="CH473984">
    <property type="protein sequence ID" value="EDM11652.1"/>
    <property type="molecule type" value="Genomic_DNA"/>
</dbReference>
<dbReference type="RefSeq" id="NP_001102439.1">
    <property type="nucleotide sequence ID" value="NM_001108969.2"/>
</dbReference>
<dbReference type="RefSeq" id="NP_001415617.1">
    <property type="nucleotide sequence ID" value="NM_001428688.1"/>
</dbReference>
<dbReference type="RefSeq" id="NP_001415618.1">
    <property type="nucleotide sequence ID" value="NM_001428689.1"/>
</dbReference>
<dbReference type="SMR" id="A6JFQ6"/>
<dbReference type="FunCoup" id="A6JFQ6">
    <property type="interactions" value="519"/>
</dbReference>
<dbReference type="STRING" id="10116.ENSRNOP00000073425"/>
<dbReference type="PhosphoSitePlus" id="A6JFQ6"/>
<dbReference type="PaxDb" id="10116-ENSRNOP00000009744"/>
<dbReference type="PeptideAtlas" id="A6JFQ6"/>
<dbReference type="Ensembl" id="ENSRNOT00000009744.6">
    <property type="protein sequence ID" value="ENSRNOP00000009744.6"/>
    <property type="gene ID" value="ENSRNOG00000006919.6"/>
</dbReference>
<dbReference type="GeneID" id="366311"/>
<dbReference type="KEGG" id="rno:366311"/>
<dbReference type="UCSC" id="RGD:1564200">
    <property type="organism name" value="rat"/>
</dbReference>
<dbReference type="AGR" id="RGD:1564200"/>
<dbReference type="CTD" id="157807"/>
<dbReference type="RGD" id="1564200">
    <property type="gene designation" value="Clvs1"/>
</dbReference>
<dbReference type="eggNOG" id="KOG1471">
    <property type="taxonomic scope" value="Eukaryota"/>
</dbReference>
<dbReference type="InParanoid" id="A6JFQ6"/>
<dbReference type="OMA" id="DSAKMTH"/>
<dbReference type="OrthoDB" id="7837562at2759"/>
<dbReference type="PhylomeDB" id="A6JFQ6"/>
<dbReference type="Reactome" id="R-RNO-432720">
    <property type="pathway name" value="Lysosome Vesicle Biogenesis"/>
</dbReference>
<dbReference type="PRO" id="PR:A6JFQ6"/>
<dbReference type="Proteomes" id="UP000002494">
    <property type="component" value="Chromosome 5"/>
</dbReference>
<dbReference type="Proteomes" id="UP000234681">
    <property type="component" value="Chromosome 5"/>
</dbReference>
<dbReference type="GO" id="GO:0030136">
    <property type="term" value="C:clathrin-coated vesicle"/>
    <property type="evidence" value="ECO:0000314"/>
    <property type="project" value="UniProtKB"/>
</dbReference>
<dbReference type="GO" id="GO:0031901">
    <property type="term" value="C:early endosome membrane"/>
    <property type="evidence" value="ECO:0007669"/>
    <property type="project" value="UniProtKB-SubCell"/>
</dbReference>
<dbReference type="GO" id="GO:0005768">
    <property type="term" value="C:endosome"/>
    <property type="evidence" value="ECO:0000250"/>
    <property type="project" value="UniProtKB"/>
</dbReference>
<dbReference type="GO" id="GO:0005802">
    <property type="term" value="C:trans-Golgi network"/>
    <property type="evidence" value="ECO:0000314"/>
    <property type="project" value="UniProtKB"/>
</dbReference>
<dbReference type="GO" id="GO:1902936">
    <property type="term" value="F:phosphatidylinositol bisphosphate binding"/>
    <property type="evidence" value="ECO:0000318"/>
    <property type="project" value="GO_Central"/>
</dbReference>
<dbReference type="GO" id="GO:0080025">
    <property type="term" value="F:phosphatidylinositol-3,5-bisphosphate binding"/>
    <property type="evidence" value="ECO:0000250"/>
    <property type="project" value="UniProtKB"/>
</dbReference>
<dbReference type="GO" id="GO:0007040">
    <property type="term" value="P:lysosome organization"/>
    <property type="evidence" value="ECO:0000315"/>
    <property type="project" value="UniProtKB"/>
</dbReference>
<dbReference type="CDD" id="cd00170">
    <property type="entry name" value="SEC14"/>
    <property type="match status" value="1"/>
</dbReference>
<dbReference type="FunFam" id="1.10.8.20:FF:000001">
    <property type="entry name" value="Alpha-tocopherol transfer protein-like"/>
    <property type="match status" value="1"/>
</dbReference>
<dbReference type="FunFam" id="3.40.525.10:FF:000002">
    <property type="entry name" value="Alpha-tocopherol transfer protein-like"/>
    <property type="match status" value="1"/>
</dbReference>
<dbReference type="Gene3D" id="1.20.5.1200">
    <property type="entry name" value="Alpha-tocopherol transfer"/>
    <property type="match status" value="1"/>
</dbReference>
<dbReference type="Gene3D" id="3.40.525.10">
    <property type="entry name" value="CRAL-TRIO lipid binding domain"/>
    <property type="match status" value="1"/>
</dbReference>
<dbReference type="Gene3D" id="1.10.8.20">
    <property type="entry name" value="N-terminal domain of phosphatidylinositol transfer protein sec14p"/>
    <property type="match status" value="1"/>
</dbReference>
<dbReference type="InterPro" id="IPR001251">
    <property type="entry name" value="CRAL-TRIO_dom"/>
</dbReference>
<dbReference type="InterPro" id="IPR036865">
    <property type="entry name" value="CRAL-TRIO_dom_sf"/>
</dbReference>
<dbReference type="InterPro" id="IPR011074">
    <property type="entry name" value="CRAL/TRIO_N_dom"/>
</dbReference>
<dbReference type="InterPro" id="IPR036273">
    <property type="entry name" value="CRAL/TRIO_N_dom_sf"/>
</dbReference>
<dbReference type="PANTHER" id="PTHR10174">
    <property type="entry name" value="ALPHA-TOCOPHEROL TRANSFER PROTEIN-RELATED"/>
    <property type="match status" value="1"/>
</dbReference>
<dbReference type="PANTHER" id="PTHR10174:SF72">
    <property type="entry name" value="CLAVESIN-1"/>
    <property type="match status" value="1"/>
</dbReference>
<dbReference type="Pfam" id="PF00650">
    <property type="entry name" value="CRAL_TRIO"/>
    <property type="match status" value="1"/>
</dbReference>
<dbReference type="Pfam" id="PF03765">
    <property type="entry name" value="CRAL_TRIO_N"/>
    <property type="match status" value="1"/>
</dbReference>
<dbReference type="PRINTS" id="PR00180">
    <property type="entry name" value="CRETINALDHBP"/>
</dbReference>
<dbReference type="SMART" id="SM01100">
    <property type="entry name" value="CRAL_TRIO_N"/>
    <property type="match status" value="1"/>
</dbReference>
<dbReference type="SMART" id="SM00516">
    <property type="entry name" value="SEC14"/>
    <property type="match status" value="1"/>
</dbReference>
<dbReference type="SUPFAM" id="SSF52087">
    <property type="entry name" value="CRAL/TRIO domain"/>
    <property type="match status" value="1"/>
</dbReference>
<dbReference type="SUPFAM" id="SSF46938">
    <property type="entry name" value="CRAL/TRIO N-terminal domain"/>
    <property type="match status" value="1"/>
</dbReference>
<dbReference type="PROSITE" id="PS50191">
    <property type="entry name" value="CRAL_TRIO"/>
    <property type="match status" value="1"/>
</dbReference>
<keyword id="KW-0968">Cytoplasmic vesicle</keyword>
<keyword id="KW-0967">Endosome</keyword>
<keyword id="KW-0333">Golgi apparatus</keyword>
<keyword id="KW-0446">Lipid-binding</keyword>
<keyword id="KW-0472">Membrane</keyword>
<keyword id="KW-1185">Reference proteome</keyword>
<feature type="chain" id="PRO_0000389619" description="Clavesin-1">
    <location>
        <begin position="1"/>
        <end position="354"/>
    </location>
</feature>
<feature type="domain" description="CRAL-TRIO" evidence="2">
    <location>
        <begin position="118"/>
        <end position="279"/>
    </location>
</feature>
<feature type="region of interest" description="Disordered" evidence="3">
    <location>
        <begin position="317"/>
        <end position="354"/>
    </location>
</feature>
<feature type="compositionally biased region" description="Basic and acidic residues" evidence="3">
    <location>
        <begin position="335"/>
        <end position="344"/>
    </location>
</feature>
<feature type="compositionally biased region" description="Polar residues" evidence="3">
    <location>
        <begin position="345"/>
        <end position="354"/>
    </location>
</feature>
<protein>
    <recommendedName>
        <fullName evidence="5">Clavesin-1</fullName>
    </recommendedName>
    <alternativeName>
        <fullName>Retinaldehyde-binding protein 1-like 1</fullName>
    </alternativeName>
</protein>